<organism>
    <name type="scientific">Homo sapiens</name>
    <name type="common">Human</name>
    <dbReference type="NCBI Taxonomy" id="9606"/>
    <lineage>
        <taxon>Eukaryota</taxon>
        <taxon>Metazoa</taxon>
        <taxon>Chordata</taxon>
        <taxon>Craniata</taxon>
        <taxon>Vertebrata</taxon>
        <taxon>Euteleostomi</taxon>
        <taxon>Mammalia</taxon>
        <taxon>Eutheria</taxon>
        <taxon>Euarchontoglires</taxon>
        <taxon>Primates</taxon>
        <taxon>Haplorrhini</taxon>
        <taxon>Catarrhini</taxon>
        <taxon>Hominidae</taxon>
        <taxon>Homo</taxon>
    </lineage>
</organism>
<evidence type="ECO:0000250" key="1"/>
<evidence type="ECO:0000250" key="2">
    <source>
        <dbReference type="UniProtKB" id="P59823"/>
    </source>
</evidence>
<evidence type="ECO:0000250" key="3">
    <source>
        <dbReference type="UniProtKB" id="P59824"/>
    </source>
</evidence>
<evidence type="ECO:0000255" key="4"/>
<evidence type="ECO:0000255" key="5">
    <source>
        <dbReference type="PROSITE-ProRule" id="PRU00114"/>
    </source>
</evidence>
<evidence type="ECO:0000255" key="6">
    <source>
        <dbReference type="PROSITE-ProRule" id="PRU00204"/>
    </source>
</evidence>
<evidence type="ECO:0000256" key="7">
    <source>
        <dbReference type="SAM" id="MobiDB-lite"/>
    </source>
</evidence>
<evidence type="ECO:0000269" key="8">
    <source>
    </source>
</evidence>
<evidence type="ECO:0000269" key="9">
    <source>
    </source>
</evidence>
<evidence type="ECO:0000269" key="10">
    <source>
    </source>
</evidence>
<evidence type="ECO:0000269" key="11">
    <source>
    </source>
</evidence>
<evidence type="ECO:0000269" key="12">
    <source>
    </source>
</evidence>
<evidence type="ECO:0000269" key="13">
    <source>
    </source>
</evidence>
<evidence type="ECO:0000269" key="14">
    <source>
    </source>
</evidence>
<evidence type="ECO:0000305" key="15"/>
<evidence type="ECO:0007829" key="16">
    <source>
        <dbReference type="PDB" id="1T3G"/>
    </source>
</evidence>
<evidence type="ECO:0007829" key="17">
    <source>
        <dbReference type="PDB" id="5WY8"/>
    </source>
</evidence>
<sequence>MKAPIPHLILLYATFTQSLKVVTKRGSADGCTDWSIDIKKYQVLVGEPVRIKCALFYGYIRTNYSLAQSAGLSLMWYKSSGPGDFEEPIAFDGSRMSKEEDSIWFRPTLLQDSGLYACVIRNSTYCMKVSISLTVGENDTGLCYNSKMKYFEKAELSKSKEISCRDIEDFLLPTREPEILWYKECRTKTWRPSIVFKRDTLLIREVREDDIGNYTCELKYGGFVVRRTTELTVTAPLTDKPPKLLYPMESKLTIQETQLGDSANLTCRAFFGYSGDVSPLIYWMKGEKFIEDLDENRVWESDIRILKEHLGEQEVSISLIVDSVEEGDLGNYSCYVENGNGRRHASVLLHKRELMYTVELAGGLGAILLLLVCLVTIYKCYKIEIMLFYRNHFGAEELDGDNKDYDAYLSYTKVDPDQWNQETGEEERFALEILPDMLEKHYGYKLFIPDRDLIPTGTYIEDVARCVDQSKRLIIVMTPNYVVRRGWSIFELETRLRNMLVTGEIKVILIECSELRGIMNYQEVEALKHTIKLLTVIKWHGPKCNKLNSKFWKRLQYEMPFKRIEPITHEQALDVSEQGPFGELQTVSAISMAAATSTALATAHPDLRSTFHNTYHSQMRQKHYYRSYEYDVPPTGTLPLTSIGNQHTYCNIPMTLINGQRPQTKSSREQNPDEAHTNSAILPLLPRETSISSVIW</sequence>
<dbReference type="EC" id="3.2.2.6" evidence="6"/>
<dbReference type="EMBL" id="AJ243874">
    <property type="protein sequence ID" value="CAB56046.1"/>
    <property type="molecule type" value="mRNA"/>
</dbReference>
<dbReference type="EMBL" id="AF181284">
    <property type="protein sequence ID" value="AAF59411.1"/>
    <property type="molecule type" value="mRNA"/>
</dbReference>
<dbReference type="EMBL" id="AF284435">
    <property type="protein sequence ID" value="AAG21369.1"/>
    <property type="molecule type" value="mRNA"/>
</dbReference>
<dbReference type="EMBL" id="AB102650">
    <property type="protein sequence ID" value="BAC81119.1"/>
    <property type="molecule type" value="mRNA"/>
</dbReference>
<dbReference type="EMBL" id="AC005748">
    <property type="status" value="NOT_ANNOTATED_CDS"/>
    <property type="molecule type" value="Genomic_DNA"/>
</dbReference>
<dbReference type="EMBL" id="AC121343">
    <property type="status" value="NOT_ANNOTATED_CDS"/>
    <property type="molecule type" value="Genomic_DNA"/>
</dbReference>
<dbReference type="EMBL" id="AC129852">
    <property type="status" value="NOT_ANNOTATED_CDS"/>
    <property type="molecule type" value="Genomic_DNA"/>
</dbReference>
<dbReference type="EMBL" id="AL031466">
    <property type="status" value="NOT_ANNOTATED_CDS"/>
    <property type="molecule type" value="Genomic_DNA"/>
</dbReference>
<dbReference type="EMBL" id="AL031575">
    <property type="status" value="NOT_ANNOTATED_CDS"/>
    <property type="molecule type" value="Genomic_DNA"/>
</dbReference>
<dbReference type="EMBL" id="CH471074">
    <property type="protein sequence ID" value="EAW99046.1"/>
    <property type="molecule type" value="Genomic_DNA"/>
</dbReference>
<dbReference type="EMBL" id="BC126345">
    <property type="protein sequence ID" value="AAI26346.1"/>
    <property type="molecule type" value="mRNA"/>
</dbReference>
<dbReference type="EMBL" id="BC126347">
    <property type="protein sequence ID" value="AAI26348.1"/>
    <property type="molecule type" value="mRNA"/>
</dbReference>
<dbReference type="CCDS" id="CCDS14218.1">
    <molecule id="Q9NZN1-1"/>
</dbReference>
<dbReference type="RefSeq" id="NP_055086.1">
    <molecule id="Q9NZN1-1"/>
    <property type="nucleotide sequence ID" value="NM_014271.4"/>
</dbReference>
<dbReference type="RefSeq" id="XP_016884729.1">
    <molecule id="Q9NZN1-1"/>
    <property type="nucleotide sequence ID" value="XM_017029240.2"/>
</dbReference>
<dbReference type="RefSeq" id="XP_054182380.1">
    <molecule id="Q9NZN1-1"/>
    <property type="nucleotide sequence ID" value="XM_054326405.1"/>
</dbReference>
<dbReference type="PDB" id="1T3G">
    <property type="method" value="X-ray"/>
    <property type="resolution" value="2.30 A"/>
    <property type="chains" value="A/B=403-561"/>
</dbReference>
<dbReference type="PDB" id="4M92">
    <property type="method" value="X-ray"/>
    <property type="resolution" value="1.60 A"/>
    <property type="chains" value="B=207-222"/>
</dbReference>
<dbReference type="PDB" id="5WY8">
    <property type="method" value="X-ray"/>
    <property type="resolution" value="3.07 A"/>
    <property type="chains" value="B=27-349"/>
</dbReference>
<dbReference type="PDBsum" id="1T3G"/>
<dbReference type="PDBsum" id="4M92"/>
<dbReference type="PDBsum" id="5WY8"/>
<dbReference type="SMR" id="Q9NZN1"/>
<dbReference type="BioGRID" id="116313">
    <property type="interactions" value="6"/>
</dbReference>
<dbReference type="FunCoup" id="Q9NZN1">
    <property type="interactions" value="23"/>
</dbReference>
<dbReference type="IntAct" id="Q9NZN1">
    <property type="interactions" value="1"/>
</dbReference>
<dbReference type="STRING" id="9606.ENSP00000368278"/>
<dbReference type="GlyCosmos" id="Q9NZN1">
    <property type="glycosylation" value="6 sites, No reported glycans"/>
</dbReference>
<dbReference type="GlyGen" id="Q9NZN1">
    <property type="glycosylation" value="6 sites"/>
</dbReference>
<dbReference type="iPTMnet" id="Q9NZN1"/>
<dbReference type="PhosphoSitePlus" id="Q9NZN1"/>
<dbReference type="BioMuta" id="IL1RAPL1"/>
<dbReference type="DMDM" id="34222654"/>
<dbReference type="MassIVE" id="Q9NZN1"/>
<dbReference type="PaxDb" id="9606-ENSP00000368278"/>
<dbReference type="PeptideAtlas" id="Q9NZN1"/>
<dbReference type="ProteomicsDB" id="83457">
    <molecule id="Q9NZN1-1"/>
</dbReference>
<dbReference type="Antibodypedia" id="433">
    <property type="antibodies" value="230 antibodies from 27 providers"/>
</dbReference>
<dbReference type="DNASU" id="11141"/>
<dbReference type="Ensembl" id="ENST00000378993.6">
    <molecule id="Q9NZN1-1"/>
    <property type="protein sequence ID" value="ENSP00000368278.1"/>
    <property type="gene ID" value="ENSG00000169306.11"/>
</dbReference>
<dbReference type="GeneID" id="11141"/>
<dbReference type="KEGG" id="hsa:11141"/>
<dbReference type="MANE-Select" id="ENST00000378993.6">
    <property type="protein sequence ID" value="ENSP00000368278.1"/>
    <property type="RefSeq nucleotide sequence ID" value="NM_014271.4"/>
    <property type="RefSeq protein sequence ID" value="NP_055086.1"/>
</dbReference>
<dbReference type="AGR" id="HGNC:5996"/>
<dbReference type="CTD" id="11141"/>
<dbReference type="DisGeNET" id="11141"/>
<dbReference type="GeneCards" id="IL1RAPL1"/>
<dbReference type="GeneReviews" id="IL1RAPL1"/>
<dbReference type="HGNC" id="HGNC:5996">
    <property type="gene designation" value="IL1RAPL1"/>
</dbReference>
<dbReference type="HPA" id="ENSG00000169306">
    <property type="expression patterns" value="Tissue enriched (brain)"/>
</dbReference>
<dbReference type="MalaCards" id="IL1RAPL1"/>
<dbReference type="MIM" id="300143">
    <property type="type" value="phenotype"/>
</dbReference>
<dbReference type="MIM" id="300206">
    <property type="type" value="gene"/>
</dbReference>
<dbReference type="neXtProt" id="NX_Q9NZN1"/>
<dbReference type="OpenTargets" id="ENSG00000169306"/>
<dbReference type="Orphanet" id="777">
    <property type="disease" value="X-linked non-syndromic intellectual disability"/>
</dbReference>
<dbReference type="PharmGKB" id="PA29812"/>
<dbReference type="VEuPathDB" id="HostDB:ENSG00000169306"/>
<dbReference type="eggNOG" id="KOG3971">
    <property type="taxonomic scope" value="Eukaryota"/>
</dbReference>
<dbReference type="GeneTree" id="ENSGT01090000260076"/>
<dbReference type="HOGENOM" id="CLU_025552_0_1_1"/>
<dbReference type="InParanoid" id="Q9NZN1"/>
<dbReference type="OMA" id="WRSSIVF"/>
<dbReference type="OrthoDB" id="9925886at2759"/>
<dbReference type="PAN-GO" id="Q9NZN1">
    <property type="GO annotations" value="1 GO annotation based on evolutionary models"/>
</dbReference>
<dbReference type="PhylomeDB" id="Q9NZN1"/>
<dbReference type="TreeFam" id="TF333913"/>
<dbReference type="PathwayCommons" id="Q9NZN1"/>
<dbReference type="Reactome" id="R-HSA-388844">
    <property type="pathway name" value="Receptor-type tyrosine-protein phosphatases"/>
</dbReference>
<dbReference type="Reactome" id="R-HSA-9007892">
    <property type="pathway name" value="Interleukin-38 signaling"/>
</dbReference>
<dbReference type="SignaLink" id="Q9NZN1"/>
<dbReference type="SIGNOR" id="Q9NZN1"/>
<dbReference type="BioGRID-ORCS" id="11141">
    <property type="hits" value="10 hits in 771 CRISPR screens"/>
</dbReference>
<dbReference type="ChiTaRS" id="IL1RAPL1">
    <property type="organism name" value="human"/>
</dbReference>
<dbReference type="EvolutionaryTrace" id="Q9NZN1"/>
<dbReference type="GeneWiki" id="IL1RAPL1"/>
<dbReference type="GenomeRNAi" id="11141"/>
<dbReference type="Pharos" id="Q9NZN1">
    <property type="development level" value="Tbio"/>
</dbReference>
<dbReference type="PRO" id="PR:Q9NZN1"/>
<dbReference type="Proteomes" id="UP000005640">
    <property type="component" value="Chromosome X"/>
</dbReference>
<dbReference type="RNAct" id="Q9NZN1">
    <property type="molecule type" value="protein"/>
</dbReference>
<dbReference type="Bgee" id="ENSG00000169306">
    <property type="expression patterns" value="Expressed in buccal mucosa cell and 88 other cell types or tissues"/>
</dbReference>
<dbReference type="ExpressionAtlas" id="Q9NZN1">
    <property type="expression patterns" value="baseline and differential"/>
</dbReference>
<dbReference type="GO" id="GO:0030424">
    <property type="term" value="C:axon"/>
    <property type="evidence" value="ECO:0007669"/>
    <property type="project" value="UniProtKB-SubCell"/>
</dbReference>
<dbReference type="GO" id="GO:0009986">
    <property type="term" value="C:cell surface"/>
    <property type="evidence" value="ECO:0000250"/>
    <property type="project" value="BHF-UCL"/>
</dbReference>
<dbReference type="GO" id="GO:0005737">
    <property type="term" value="C:cytoplasm"/>
    <property type="evidence" value="ECO:0007669"/>
    <property type="project" value="UniProtKB-SubCell"/>
</dbReference>
<dbReference type="GO" id="GO:0030425">
    <property type="term" value="C:dendrite"/>
    <property type="evidence" value="ECO:0000250"/>
    <property type="project" value="BHF-UCL"/>
</dbReference>
<dbReference type="GO" id="GO:0098978">
    <property type="term" value="C:glutamatergic synapse"/>
    <property type="evidence" value="ECO:0000314"/>
    <property type="project" value="SynGO"/>
</dbReference>
<dbReference type="GO" id="GO:0005886">
    <property type="term" value="C:plasma membrane"/>
    <property type="evidence" value="ECO:0000314"/>
    <property type="project" value="UniProtKB"/>
</dbReference>
<dbReference type="GO" id="GO:0045211">
    <property type="term" value="C:postsynaptic membrane"/>
    <property type="evidence" value="ECO:0000303"/>
    <property type="project" value="BHF-UCL"/>
</dbReference>
<dbReference type="GO" id="GO:0061809">
    <property type="term" value="F:NAD+ nucleosidase activity, cyclic ADP-ribose generating"/>
    <property type="evidence" value="ECO:0007669"/>
    <property type="project" value="UniProtKB-EC"/>
</dbReference>
<dbReference type="GO" id="GO:0005102">
    <property type="term" value="F:signaling receptor binding"/>
    <property type="evidence" value="ECO:0000250"/>
    <property type="project" value="BHF-UCL"/>
</dbReference>
<dbReference type="GO" id="GO:0007166">
    <property type="term" value="P:cell surface receptor signaling pathway"/>
    <property type="evidence" value="ECO:0000318"/>
    <property type="project" value="GO_Central"/>
</dbReference>
<dbReference type="GO" id="GO:0045920">
    <property type="term" value="P:negative regulation of exocytosis"/>
    <property type="evidence" value="ECO:0000314"/>
    <property type="project" value="UniProtKB"/>
</dbReference>
<dbReference type="GO" id="GO:0030182">
    <property type="term" value="P:neuron differentiation"/>
    <property type="evidence" value="ECO:0000250"/>
    <property type="project" value="BHF-UCL"/>
</dbReference>
<dbReference type="GO" id="GO:0061003">
    <property type="term" value="P:positive regulation of dendritic spine morphogenesis"/>
    <property type="evidence" value="ECO:0000250"/>
    <property type="project" value="BHF-UCL"/>
</dbReference>
<dbReference type="GO" id="GO:0051965">
    <property type="term" value="P:positive regulation of synapse assembly"/>
    <property type="evidence" value="ECO:0000250"/>
    <property type="project" value="UniProtKB"/>
</dbReference>
<dbReference type="GO" id="GO:0097105">
    <property type="term" value="P:presynaptic membrane assembly"/>
    <property type="evidence" value="ECO:0000250"/>
    <property type="project" value="BHF-UCL"/>
</dbReference>
<dbReference type="GO" id="GO:0010975">
    <property type="term" value="P:regulation of neuron projection development"/>
    <property type="evidence" value="ECO:0000250"/>
    <property type="project" value="UniProtKB"/>
</dbReference>
<dbReference type="GO" id="GO:0099175">
    <property type="term" value="P:regulation of postsynapse organization"/>
    <property type="evidence" value="ECO:0000314"/>
    <property type="project" value="SynGO"/>
</dbReference>
<dbReference type="GO" id="GO:1905606">
    <property type="term" value="P:regulation of presynapse assembly"/>
    <property type="evidence" value="ECO:0000314"/>
    <property type="project" value="SynGO"/>
</dbReference>
<dbReference type="GO" id="GO:0099560">
    <property type="term" value="P:synaptic membrane adhesion"/>
    <property type="evidence" value="ECO:0000250"/>
    <property type="project" value="BHF-UCL"/>
</dbReference>
<dbReference type="GO" id="GO:0099545">
    <property type="term" value="P:trans-synaptic signaling by trans-synaptic complex"/>
    <property type="evidence" value="ECO:0000314"/>
    <property type="project" value="SynGO"/>
</dbReference>
<dbReference type="CDD" id="cd00096">
    <property type="entry name" value="Ig"/>
    <property type="match status" value="1"/>
</dbReference>
<dbReference type="CDD" id="cd05896">
    <property type="entry name" value="Ig1_IL1RAPL-1_like"/>
    <property type="match status" value="1"/>
</dbReference>
<dbReference type="FunFam" id="2.60.40.10:FF:000188">
    <property type="entry name" value="Interleukin-1 receptor accessory protein-like 1"/>
    <property type="match status" value="1"/>
</dbReference>
<dbReference type="FunFam" id="2.60.40.10:FF:001486">
    <property type="entry name" value="Interleukin-1 receptor accessory protein-like 1"/>
    <property type="match status" value="1"/>
</dbReference>
<dbReference type="FunFam" id="2.60.40.10:FF:000220">
    <property type="entry name" value="X-linked interleukin-1 receptor accessory protein-like 1"/>
    <property type="match status" value="1"/>
</dbReference>
<dbReference type="FunFam" id="3.40.50.10140:FF:000004">
    <property type="entry name" value="X-linked interleukin-1 receptor accessory protein-like 1"/>
    <property type="match status" value="1"/>
</dbReference>
<dbReference type="Gene3D" id="2.60.40.10">
    <property type="entry name" value="Immunoglobulins"/>
    <property type="match status" value="3"/>
</dbReference>
<dbReference type="Gene3D" id="3.40.50.10140">
    <property type="entry name" value="Toll/interleukin-1 receptor homology (TIR) domain"/>
    <property type="match status" value="1"/>
</dbReference>
<dbReference type="InterPro" id="IPR007110">
    <property type="entry name" value="Ig-like_dom"/>
</dbReference>
<dbReference type="InterPro" id="IPR036179">
    <property type="entry name" value="Ig-like_dom_sf"/>
</dbReference>
<dbReference type="InterPro" id="IPR013783">
    <property type="entry name" value="Ig-like_fold"/>
</dbReference>
<dbReference type="InterPro" id="IPR003599">
    <property type="entry name" value="Ig_sub"/>
</dbReference>
<dbReference type="InterPro" id="IPR003598">
    <property type="entry name" value="Ig_sub2"/>
</dbReference>
<dbReference type="InterPro" id="IPR015621">
    <property type="entry name" value="IL-1_rcpt_fam"/>
</dbReference>
<dbReference type="InterPro" id="IPR041416">
    <property type="entry name" value="IL-1RAcP-like_ig"/>
</dbReference>
<dbReference type="InterPro" id="IPR013151">
    <property type="entry name" value="Immunoglobulin_dom"/>
</dbReference>
<dbReference type="InterPro" id="IPR000157">
    <property type="entry name" value="TIR_dom"/>
</dbReference>
<dbReference type="InterPro" id="IPR035897">
    <property type="entry name" value="Toll_tir_struct_dom_sf"/>
</dbReference>
<dbReference type="PANTHER" id="PTHR11890:SF22">
    <property type="entry name" value="INTERLEUKIN-1 RECEPTOR ACCESSORY PROTEIN-LIKE 1"/>
    <property type="match status" value="1"/>
</dbReference>
<dbReference type="PANTHER" id="PTHR11890">
    <property type="entry name" value="INTERLEUKIN-1 RECEPTOR FAMILY MEMBER"/>
    <property type="match status" value="1"/>
</dbReference>
<dbReference type="Pfam" id="PF00047">
    <property type="entry name" value="ig"/>
    <property type="match status" value="1"/>
</dbReference>
<dbReference type="Pfam" id="PF18452">
    <property type="entry name" value="Ig_6"/>
    <property type="match status" value="1"/>
</dbReference>
<dbReference type="Pfam" id="PF01582">
    <property type="entry name" value="TIR"/>
    <property type="match status" value="1"/>
</dbReference>
<dbReference type="PRINTS" id="PR01537">
    <property type="entry name" value="INTRLKN1R1F"/>
</dbReference>
<dbReference type="SMART" id="SM00409">
    <property type="entry name" value="IG"/>
    <property type="match status" value="3"/>
</dbReference>
<dbReference type="SMART" id="SM00408">
    <property type="entry name" value="IGc2"/>
    <property type="match status" value="2"/>
</dbReference>
<dbReference type="SMART" id="SM00255">
    <property type="entry name" value="TIR"/>
    <property type="match status" value="1"/>
</dbReference>
<dbReference type="SUPFAM" id="SSF48726">
    <property type="entry name" value="Immunoglobulin"/>
    <property type="match status" value="3"/>
</dbReference>
<dbReference type="SUPFAM" id="SSF52200">
    <property type="entry name" value="Toll/Interleukin receptor TIR domain"/>
    <property type="match status" value="1"/>
</dbReference>
<dbReference type="PROSITE" id="PS50835">
    <property type="entry name" value="IG_LIKE"/>
    <property type="match status" value="3"/>
</dbReference>
<dbReference type="PROSITE" id="PS50104">
    <property type="entry name" value="TIR"/>
    <property type="match status" value="1"/>
</dbReference>
<reference key="1">
    <citation type="journal article" date="1999" name="Nat. Genet.">
        <title>A new member of the IL-1 receptor family highly expressed in hippocampus and involved in X-linked mental retardation.</title>
        <authorList>
            <person name="Carrie A."/>
            <person name="Jun L."/>
            <person name="Bienvenu T."/>
            <person name="Vinet M.-C."/>
            <person name="McDonell N."/>
            <person name="Couvert P."/>
            <person name="Zemni R."/>
            <person name="Cardona A."/>
            <person name="Van Buggenhout G."/>
            <person name="Frints S."/>
            <person name="Hamel B.C.J."/>
            <person name="Moraine C."/>
            <person name="Ropers H.-H."/>
            <person name="Strom T."/>
            <person name="Howell G.R."/>
            <person name="Whittaker A."/>
            <person name="Ross M.T."/>
            <person name="Kahn A."/>
            <person name="Fryns J.-P."/>
            <person name="Beldjord C."/>
            <person name="Marynen P."/>
            <person name="Chelly J."/>
        </authorList>
    </citation>
    <scope>NUCLEOTIDE SEQUENCE [MRNA]</scope>
    <scope>INVOLVEMENT IN NONSPECIFIC XLMR</scope>
    <scope>TISSUE SPECIFICITY</scope>
    <scope>ALTERNATIVE SPLICING</scope>
    <source>
        <tissue>Fetal brain</tissue>
    </source>
</reference>
<reference key="2">
    <citation type="journal article" date="2000" name="Eur. J. Hum. Genet.">
        <title>Two novel members of the interleukin-1 receptor gene family, one deleted in Xp22.3-Xp21.3 mental retardation.</title>
        <authorList>
            <person name="Jin H."/>
            <person name="Gardner R.J."/>
            <person name="Viswesvaraiah R."/>
            <person name="Muntoni F."/>
            <person name="Roberts R.G."/>
        </authorList>
    </citation>
    <scope>NUCLEOTIDE SEQUENCE [MRNA]</scope>
    <scope>INVOLVEMENT IN XLID21</scope>
</reference>
<reference key="3">
    <citation type="journal article" date="2000" name="J. Biol. Chem.">
        <title>Identification and characterization of two members of a novel class of the interleukin-1 receptor (IL-1R) family. Delineation of a new class of IL-1R-related proteins based on signaling.</title>
        <authorList>
            <person name="Born T.L."/>
            <person name="Smith D.E."/>
            <person name="Garka K.E."/>
            <person name="Renshaw B.R."/>
            <person name="Bertles J.S."/>
            <person name="Sims J.E."/>
        </authorList>
    </citation>
    <scope>NUCLEOTIDE SEQUENCE [MRNA]</scope>
    <scope>TISSUE SPECIFICITY</scope>
    <source>
        <tissue>Brain</tissue>
        <tissue>Testis</tissue>
    </source>
</reference>
<reference key="4">
    <citation type="journal article" date="2003" name="Mol. Biol. Evol.">
        <title>Gene diversity patterns at 10 X-chromosomal loci in humans and chimpanzees.</title>
        <authorList>
            <person name="Kitano T."/>
            <person name="Schwarz C."/>
            <person name="Nickel B."/>
            <person name="Paeaebo S."/>
        </authorList>
    </citation>
    <scope>NUCLEOTIDE SEQUENCE [MRNA]</scope>
</reference>
<reference key="5">
    <citation type="journal article" date="2005" name="Nature">
        <title>The DNA sequence of the human X chromosome.</title>
        <authorList>
            <person name="Ross M.T."/>
            <person name="Grafham D.V."/>
            <person name="Coffey A.J."/>
            <person name="Scherer S."/>
            <person name="McLay K."/>
            <person name="Muzny D."/>
            <person name="Platzer M."/>
            <person name="Howell G.R."/>
            <person name="Burrows C."/>
            <person name="Bird C.P."/>
            <person name="Frankish A."/>
            <person name="Lovell F.L."/>
            <person name="Howe K.L."/>
            <person name="Ashurst J.L."/>
            <person name="Fulton R.S."/>
            <person name="Sudbrak R."/>
            <person name="Wen G."/>
            <person name="Jones M.C."/>
            <person name="Hurles M.E."/>
            <person name="Andrews T.D."/>
            <person name="Scott C.E."/>
            <person name="Searle S."/>
            <person name="Ramser J."/>
            <person name="Whittaker A."/>
            <person name="Deadman R."/>
            <person name="Carter N.P."/>
            <person name="Hunt S.E."/>
            <person name="Chen R."/>
            <person name="Cree A."/>
            <person name="Gunaratne P."/>
            <person name="Havlak P."/>
            <person name="Hodgson A."/>
            <person name="Metzker M.L."/>
            <person name="Richards S."/>
            <person name="Scott G."/>
            <person name="Steffen D."/>
            <person name="Sodergren E."/>
            <person name="Wheeler D.A."/>
            <person name="Worley K.C."/>
            <person name="Ainscough R."/>
            <person name="Ambrose K.D."/>
            <person name="Ansari-Lari M.A."/>
            <person name="Aradhya S."/>
            <person name="Ashwell R.I."/>
            <person name="Babbage A.K."/>
            <person name="Bagguley C.L."/>
            <person name="Ballabio A."/>
            <person name="Banerjee R."/>
            <person name="Barker G.E."/>
            <person name="Barlow K.F."/>
            <person name="Barrett I.P."/>
            <person name="Bates K.N."/>
            <person name="Beare D.M."/>
            <person name="Beasley H."/>
            <person name="Beasley O."/>
            <person name="Beck A."/>
            <person name="Bethel G."/>
            <person name="Blechschmidt K."/>
            <person name="Brady N."/>
            <person name="Bray-Allen S."/>
            <person name="Bridgeman A.M."/>
            <person name="Brown A.J."/>
            <person name="Brown M.J."/>
            <person name="Bonnin D."/>
            <person name="Bruford E.A."/>
            <person name="Buhay C."/>
            <person name="Burch P."/>
            <person name="Burford D."/>
            <person name="Burgess J."/>
            <person name="Burrill W."/>
            <person name="Burton J."/>
            <person name="Bye J.M."/>
            <person name="Carder C."/>
            <person name="Carrel L."/>
            <person name="Chako J."/>
            <person name="Chapman J.C."/>
            <person name="Chavez D."/>
            <person name="Chen E."/>
            <person name="Chen G."/>
            <person name="Chen Y."/>
            <person name="Chen Z."/>
            <person name="Chinault C."/>
            <person name="Ciccodicola A."/>
            <person name="Clark S.Y."/>
            <person name="Clarke G."/>
            <person name="Clee C.M."/>
            <person name="Clegg S."/>
            <person name="Clerc-Blankenburg K."/>
            <person name="Clifford K."/>
            <person name="Cobley V."/>
            <person name="Cole C.G."/>
            <person name="Conquer J.S."/>
            <person name="Corby N."/>
            <person name="Connor R.E."/>
            <person name="David R."/>
            <person name="Davies J."/>
            <person name="Davis C."/>
            <person name="Davis J."/>
            <person name="Delgado O."/>
            <person name="Deshazo D."/>
            <person name="Dhami P."/>
            <person name="Ding Y."/>
            <person name="Dinh H."/>
            <person name="Dodsworth S."/>
            <person name="Draper H."/>
            <person name="Dugan-Rocha S."/>
            <person name="Dunham A."/>
            <person name="Dunn M."/>
            <person name="Durbin K.J."/>
            <person name="Dutta I."/>
            <person name="Eades T."/>
            <person name="Ellwood M."/>
            <person name="Emery-Cohen A."/>
            <person name="Errington H."/>
            <person name="Evans K.L."/>
            <person name="Faulkner L."/>
            <person name="Francis F."/>
            <person name="Frankland J."/>
            <person name="Fraser A.E."/>
            <person name="Galgoczy P."/>
            <person name="Gilbert J."/>
            <person name="Gill R."/>
            <person name="Gloeckner G."/>
            <person name="Gregory S.G."/>
            <person name="Gribble S."/>
            <person name="Griffiths C."/>
            <person name="Grocock R."/>
            <person name="Gu Y."/>
            <person name="Gwilliam R."/>
            <person name="Hamilton C."/>
            <person name="Hart E.A."/>
            <person name="Hawes A."/>
            <person name="Heath P.D."/>
            <person name="Heitmann K."/>
            <person name="Hennig S."/>
            <person name="Hernandez J."/>
            <person name="Hinzmann B."/>
            <person name="Ho S."/>
            <person name="Hoffs M."/>
            <person name="Howden P.J."/>
            <person name="Huckle E.J."/>
            <person name="Hume J."/>
            <person name="Hunt P.J."/>
            <person name="Hunt A.R."/>
            <person name="Isherwood J."/>
            <person name="Jacob L."/>
            <person name="Johnson D."/>
            <person name="Jones S."/>
            <person name="de Jong P.J."/>
            <person name="Joseph S.S."/>
            <person name="Keenan S."/>
            <person name="Kelly S."/>
            <person name="Kershaw J.K."/>
            <person name="Khan Z."/>
            <person name="Kioschis P."/>
            <person name="Klages S."/>
            <person name="Knights A.J."/>
            <person name="Kosiura A."/>
            <person name="Kovar-Smith C."/>
            <person name="Laird G.K."/>
            <person name="Langford C."/>
            <person name="Lawlor S."/>
            <person name="Leversha M."/>
            <person name="Lewis L."/>
            <person name="Liu W."/>
            <person name="Lloyd C."/>
            <person name="Lloyd D.M."/>
            <person name="Loulseged H."/>
            <person name="Loveland J.E."/>
            <person name="Lovell J.D."/>
            <person name="Lozado R."/>
            <person name="Lu J."/>
            <person name="Lyne R."/>
            <person name="Ma J."/>
            <person name="Maheshwari M."/>
            <person name="Matthews L.H."/>
            <person name="McDowall J."/>
            <person name="McLaren S."/>
            <person name="McMurray A."/>
            <person name="Meidl P."/>
            <person name="Meitinger T."/>
            <person name="Milne S."/>
            <person name="Miner G."/>
            <person name="Mistry S.L."/>
            <person name="Morgan M."/>
            <person name="Morris S."/>
            <person name="Mueller I."/>
            <person name="Mullikin J.C."/>
            <person name="Nguyen N."/>
            <person name="Nordsiek G."/>
            <person name="Nyakatura G."/>
            <person name="O'dell C.N."/>
            <person name="Okwuonu G."/>
            <person name="Palmer S."/>
            <person name="Pandian R."/>
            <person name="Parker D."/>
            <person name="Parrish J."/>
            <person name="Pasternak S."/>
            <person name="Patel D."/>
            <person name="Pearce A.V."/>
            <person name="Pearson D.M."/>
            <person name="Pelan S.E."/>
            <person name="Perez L."/>
            <person name="Porter K.M."/>
            <person name="Ramsey Y."/>
            <person name="Reichwald K."/>
            <person name="Rhodes S."/>
            <person name="Ridler K.A."/>
            <person name="Schlessinger D."/>
            <person name="Schueler M.G."/>
            <person name="Sehra H.K."/>
            <person name="Shaw-Smith C."/>
            <person name="Shen H."/>
            <person name="Sheridan E.M."/>
            <person name="Shownkeen R."/>
            <person name="Skuce C.D."/>
            <person name="Smith M.L."/>
            <person name="Sotheran E.C."/>
            <person name="Steingruber H.E."/>
            <person name="Steward C.A."/>
            <person name="Storey R."/>
            <person name="Swann R.M."/>
            <person name="Swarbreck D."/>
            <person name="Tabor P.E."/>
            <person name="Taudien S."/>
            <person name="Taylor T."/>
            <person name="Teague B."/>
            <person name="Thomas K."/>
            <person name="Thorpe A."/>
            <person name="Timms K."/>
            <person name="Tracey A."/>
            <person name="Trevanion S."/>
            <person name="Tromans A.C."/>
            <person name="d'Urso M."/>
            <person name="Verduzco D."/>
            <person name="Villasana D."/>
            <person name="Waldron L."/>
            <person name="Wall M."/>
            <person name="Wang Q."/>
            <person name="Warren J."/>
            <person name="Warry G.L."/>
            <person name="Wei X."/>
            <person name="West A."/>
            <person name="Whitehead S.L."/>
            <person name="Whiteley M.N."/>
            <person name="Wilkinson J.E."/>
            <person name="Willey D.L."/>
            <person name="Williams G."/>
            <person name="Williams L."/>
            <person name="Williamson A."/>
            <person name="Williamson H."/>
            <person name="Wilming L."/>
            <person name="Woodmansey R.L."/>
            <person name="Wray P.W."/>
            <person name="Yen J."/>
            <person name="Zhang J."/>
            <person name="Zhou J."/>
            <person name="Zoghbi H."/>
            <person name="Zorilla S."/>
            <person name="Buck D."/>
            <person name="Reinhardt R."/>
            <person name="Poustka A."/>
            <person name="Rosenthal A."/>
            <person name="Lehrach H."/>
            <person name="Meindl A."/>
            <person name="Minx P.J."/>
            <person name="Hillier L.W."/>
            <person name="Willard H.F."/>
            <person name="Wilson R.K."/>
            <person name="Waterston R.H."/>
            <person name="Rice C.M."/>
            <person name="Vaudin M."/>
            <person name="Coulson A."/>
            <person name="Nelson D.L."/>
            <person name="Weinstock G."/>
            <person name="Sulston J.E."/>
            <person name="Durbin R.M."/>
            <person name="Hubbard T."/>
            <person name="Gibbs R.A."/>
            <person name="Beck S."/>
            <person name="Rogers J."/>
            <person name="Bentley D.R."/>
        </authorList>
    </citation>
    <scope>NUCLEOTIDE SEQUENCE [LARGE SCALE GENOMIC DNA]</scope>
</reference>
<reference key="6">
    <citation type="submission" date="2005-07" db="EMBL/GenBank/DDBJ databases">
        <authorList>
            <person name="Mural R.J."/>
            <person name="Istrail S."/>
            <person name="Sutton G."/>
            <person name="Florea L."/>
            <person name="Halpern A.L."/>
            <person name="Mobarry C.M."/>
            <person name="Lippert R."/>
            <person name="Walenz B."/>
            <person name="Shatkay H."/>
            <person name="Dew I."/>
            <person name="Miller J.R."/>
            <person name="Flanigan M.J."/>
            <person name="Edwards N.J."/>
            <person name="Bolanos R."/>
            <person name="Fasulo D."/>
            <person name="Halldorsson B.V."/>
            <person name="Hannenhalli S."/>
            <person name="Turner R."/>
            <person name="Yooseph S."/>
            <person name="Lu F."/>
            <person name="Nusskern D.R."/>
            <person name="Shue B.C."/>
            <person name="Zheng X.H."/>
            <person name="Zhong F."/>
            <person name="Delcher A.L."/>
            <person name="Huson D.H."/>
            <person name="Kravitz S.A."/>
            <person name="Mouchard L."/>
            <person name="Reinert K."/>
            <person name="Remington K.A."/>
            <person name="Clark A.G."/>
            <person name="Waterman M.S."/>
            <person name="Eichler E.E."/>
            <person name="Adams M.D."/>
            <person name="Hunkapiller M.W."/>
            <person name="Myers E.W."/>
            <person name="Venter J.C."/>
        </authorList>
    </citation>
    <scope>NUCLEOTIDE SEQUENCE [LARGE SCALE GENOMIC DNA]</scope>
</reference>
<reference key="7">
    <citation type="journal article" date="2004" name="Genome Res.">
        <title>The status, quality, and expansion of the NIH full-length cDNA project: the Mammalian Gene Collection (MGC).</title>
        <authorList>
            <consortium name="The MGC Project Team"/>
        </authorList>
    </citation>
    <scope>NUCLEOTIDE SEQUENCE [LARGE SCALE MRNA]</scope>
    <source>
        <tissue>Brain</tissue>
    </source>
</reference>
<reference key="8">
    <citation type="journal article" date="2003" name="Hum. Mol. Genet.">
        <title>IL1 receptor accessory protein like, a protein involved in X-linked mental retardation, interacts with Neuronal Calcium Sensor-1 and regulates exocytosis.</title>
        <authorList>
            <person name="Bahi N."/>
            <person name="Friocourt G."/>
            <person name="Carrie A."/>
            <person name="Graham M.E."/>
            <person name="Weiss J.L."/>
            <person name="Chafey P."/>
            <person name="Fauchereau F."/>
            <person name="Burgoyne R.D."/>
            <person name="Chelly J."/>
        </authorList>
    </citation>
    <scope>FUNCTION</scope>
    <scope>SUBCELLULAR LOCATION</scope>
    <scope>INTERACTION WITH NCS1</scope>
</reference>
<reference key="9">
    <citation type="journal article" date="2006" name="Am. J. Med. Genet. A">
        <title>A truncating mutation in the IL1RAPL1 gene is responsible for X-linked mental retardation in the MRX21 family.</title>
        <authorList>
            <person name="Tabolacci E."/>
            <person name="Pomponi M.G."/>
            <person name="Pietrobono R."/>
            <person name="Terracciano A."/>
            <person name="Chiurazzi P."/>
            <person name="Neri G."/>
        </authorList>
    </citation>
    <scope>INVOLVEMENT IN XLID21</scope>
</reference>
<reference key="10">
    <citation type="journal article" date="2008" name="Hum. Mol. Genet.">
        <title>Mutations in the calcium-related gene IL1RAPL1 are associated with autism.</title>
        <authorList>
            <person name="Piton A."/>
            <person name="Michaud J.L."/>
            <person name="Peng H."/>
            <person name="Aradhya S."/>
            <person name="Gauthier J."/>
            <person name="Mottron L."/>
            <person name="Champagne N."/>
            <person name="Lafreniere R.G."/>
            <person name="Hamdan F.F."/>
            <person name="Joober R."/>
            <person name="Fombonne E."/>
            <person name="Marineau C."/>
            <person name="Cossette P."/>
            <person name="Dube M.P."/>
            <person name="Haghighi P."/>
            <person name="Drapeau P."/>
            <person name="Barker P.A."/>
            <person name="Carbonetto S."/>
            <person name="Rouleau G.A."/>
        </authorList>
    </citation>
    <scope>VARIANTS ARG-379; HIS-618; SER-637 AND VAL-643</scope>
</reference>
<reference key="11">
    <citation type="journal article" date="2004" name="J. Biol. Chem.">
        <title>Crystal structure of the Toll/interleukin-1 receptor domain of human IL-1RAPL.</title>
        <authorList>
            <person name="Khan J.A."/>
            <person name="Brint E.K."/>
            <person name="O'Neill L.A.J."/>
            <person name="Tong L."/>
        </authorList>
    </citation>
    <scope>X-RAY CRYSTALLOGRAPHY (2.30 ANGSTROMS) OF 403-561</scope>
    <scope>FUNCTION</scope>
    <scope>DIMERIZATION</scope>
</reference>
<gene>
    <name type="primary">IL1RAPL1</name>
    <name type="synonym">OPHN4</name>
</gene>
<feature type="signal peptide" evidence="4">
    <location>
        <begin position="1"/>
        <end position="18"/>
    </location>
</feature>
<feature type="chain" id="PRO_0000015454" description="Interleukin-1 receptor accessory protein-like 1">
    <location>
        <begin position="19"/>
        <end position="696"/>
    </location>
</feature>
<feature type="topological domain" description="Extracellular" evidence="4">
    <location>
        <begin position="19"/>
        <end position="357"/>
    </location>
</feature>
<feature type="transmembrane region" description="Helical" evidence="4">
    <location>
        <begin position="358"/>
        <end position="378"/>
    </location>
</feature>
<feature type="topological domain" description="Cytoplasmic" evidence="4">
    <location>
        <begin position="379"/>
        <end position="696"/>
    </location>
</feature>
<feature type="domain" description="Ig-like C2-type 1">
    <location>
        <begin position="19"/>
        <end position="134"/>
    </location>
</feature>
<feature type="domain" description="Ig-like C2-type 2">
    <location>
        <begin position="143"/>
        <end position="232"/>
    </location>
</feature>
<feature type="domain" description="Ig-like C2-type 3">
    <location>
        <begin position="242"/>
        <end position="350"/>
    </location>
</feature>
<feature type="domain" description="TIR" evidence="6">
    <location>
        <begin position="403"/>
        <end position="559"/>
    </location>
</feature>
<feature type="region of interest" description="Interaction with NCS1" evidence="11">
    <location>
        <begin position="549"/>
        <end position="644"/>
    </location>
</feature>
<feature type="region of interest" description="Disordered" evidence="7">
    <location>
        <begin position="659"/>
        <end position="680"/>
    </location>
</feature>
<feature type="compositionally biased region" description="Basic and acidic residues" evidence="7">
    <location>
        <begin position="666"/>
        <end position="676"/>
    </location>
</feature>
<feature type="active site" evidence="6">
    <location>
        <position position="491"/>
    </location>
</feature>
<feature type="site" description="Essential for interaction with PTPRD" evidence="2">
    <location>
        <position position="34"/>
    </location>
</feature>
<feature type="glycosylation site" description="N-linked (GlcNAc...) asparagine" evidence="4">
    <location>
        <position position="63"/>
    </location>
</feature>
<feature type="glycosylation site" description="N-linked (GlcNAc...) asparagine" evidence="4">
    <location>
        <position position="122"/>
    </location>
</feature>
<feature type="glycosylation site" description="N-linked (GlcNAc...) asparagine" evidence="4">
    <location>
        <position position="138"/>
    </location>
</feature>
<feature type="glycosylation site" description="N-linked (GlcNAc...) asparagine" evidence="4">
    <location>
        <position position="213"/>
    </location>
</feature>
<feature type="glycosylation site" description="N-linked (GlcNAc...) asparagine" evidence="4">
    <location>
        <position position="264"/>
    </location>
</feature>
<feature type="glycosylation site" description="N-linked (GlcNAc...) asparagine" evidence="4">
    <location>
        <position position="331"/>
    </location>
</feature>
<feature type="disulfide bond" evidence="2">
    <location>
        <begin position="31"/>
        <end position="126"/>
    </location>
</feature>
<feature type="disulfide bond" evidence="5">
    <location>
        <begin position="53"/>
        <end position="118"/>
    </location>
</feature>
<feature type="disulfide bond" evidence="2">
    <location>
        <begin position="143"/>
        <end position="185"/>
    </location>
</feature>
<feature type="disulfide bond" evidence="5">
    <location>
        <begin position="164"/>
        <end position="216"/>
    </location>
</feature>
<feature type="disulfide bond" evidence="5">
    <location>
        <begin position="267"/>
        <end position="334"/>
    </location>
</feature>
<feature type="sequence variant" id="VAR_062263" description="In dbSNP:rs138267399." evidence="14">
    <original>K</original>
    <variation>R</variation>
    <location>
        <position position="379"/>
    </location>
</feature>
<feature type="sequence variant" id="VAR_062264" description="In dbSNP:rs890627874." evidence="14">
    <original>Q</original>
    <variation>H</variation>
    <location>
        <position position="618"/>
    </location>
</feature>
<feature type="sequence variant" id="VAR_062265" description="In dbSNP:rs756672167." evidence="14">
    <original>T</original>
    <variation>S</variation>
    <location>
        <position position="637"/>
    </location>
</feature>
<feature type="sequence variant" id="VAR_062266" description="In dbSNP:rs746481663." evidence="14">
    <original>I</original>
    <variation>V</variation>
    <location>
        <position position="643"/>
    </location>
</feature>
<feature type="strand" evidence="17">
    <location>
        <begin position="32"/>
        <end position="34"/>
    </location>
</feature>
<feature type="strand" evidence="17">
    <location>
        <begin position="40"/>
        <end position="44"/>
    </location>
</feature>
<feature type="strand" evidence="17">
    <location>
        <begin position="49"/>
        <end position="52"/>
    </location>
</feature>
<feature type="helix" evidence="17">
    <location>
        <begin position="54"/>
        <end position="58"/>
    </location>
</feature>
<feature type="helix" evidence="17">
    <location>
        <begin position="64"/>
        <end position="69"/>
    </location>
</feature>
<feature type="strand" evidence="17">
    <location>
        <begin position="73"/>
        <end position="84"/>
    </location>
</feature>
<feature type="strand" evidence="17">
    <location>
        <begin position="93"/>
        <end position="99"/>
    </location>
</feature>
<feature type="strand" evidence="17">
    <location>
        <begin position="102"/>
        <end position="107"/>
    </location>
</feature>
<feature type="helix" evidence="17">
    <location>
        <begin position="110"/>
        <end position="112"/>
    </location>
</feature>
<feature type="strand" evidence="17">
    <location>
        <begin position="114"/>
        <end position="121"/>
    </location>
</feature>
<feature type="strand" evidence="17">
    <location>
        <begin position="126"/>
        <end position="136"/>
    </location>
</feature>
<feature type="strand" evidence="17">
    <location>
        <begin position="142"/>
        <end position="144"/>
    </location>
</feature>
<feature type="strand" evidence="17">
    <location>
        <begin position="150"/>
        <end position="155"/>
    </location>
</feature>
<feature type="strand" evidence="17">
    <location>
        <begin position="160"/>
        <end position="163"/>
    </location>
</feature>
<feature type="helix" evidence="17">
    <location>
        <begin position="168"/>
        <end position="170"/>
    </location>
</feature>
<feature type="strand" evidence="17">
    <location>
        <begin position="180"/>
        <end position="183"/>
    </location>
</feature>
<feature type="strand" evidence="17">
    <location>
        <begin position="200"/>
        <end position="205"/>
    </location>
</feature>
<feature type="helix" evidence="17">
    <location>
        <begin position="208"/>
        <end position="210"/>
    </location>
</feature>
<feature type="strand" evidence="17">
    <location>
        <begin position="212"/>
        <end position="220"/>
    </location>
</feature>
<feature type="strand" evidence="17">
    <location>
        <begin position="223"/>
        <end position="234"/>
    </location>
</feature>
<feature type="strand" evidence="17">
    <location>
        <begin position="243"/>
        <end position="247"/>
    </location>
</feature>
<feature type="strand" evidence="17">
    <location>
        <begin position="259"/>
        <end position="261"/>
    </location>
</feature>
<feature type="strand" evidence="17">
    <location>
        <begin position="263"/>
        <end position="271"/>
    </location>
</feature>
<feature type="strand" evidence="17">
    <location>
        <begin position="274"/>
        <end position="277"/>
    </location>
</feature>
<feature type="strand" evidence="17">
    <location>
        <begin position="280"/>
        <end position="285"/>
    </location>
</feature>
<feature type="turn" evidence="17">
    <location>
        <begin position="295"/>
        <end position="297"/>
    </location>
</feature>
<feature type="strand" evidence="17">
    <location>
        <begin position="298"/>
        <end position="300"/>
    </location>
</feature>
<feature type="strand" evidence="17">
    <location>
        <begin position="304"/>
        <end position="309"/>
    </location>
</feature>
<feature type="strand" evidence="17">
    <location>
        <begin position="312"/>
        <end position="323"/>
    </location>
</feature>
<feature type="turn" evidence="17">
    <location>
        <begin position="326"/>
        <end position="328"/>
    </location>
</feature>
<feature type="strand" evidence="17">
    <location>
        <begin position="330"/>
        <end position="338"/>
    </location>
</feature>
<feature type="strand" evidence="17">
    <location>
        <begin position="341"/>
        <end position="348"/>
    </location>
</feature>
<feature type="strand" evidence="16">
    <location>
        <begin position="405"/>
        <end position="410"/>
    </location>
</feature>
<feature type="helix" evidence="16">
    <location>
        <begin position="426"/>
        <end position="431"/>
    </location>
</feature>
<feature type="helix" evidence="16">
    <location>
        <begin position="433"/>
        <end position="440"/>
    </location>
</feature>
<feature type="helix" evidence="16">
    <location>
        <begin position="449"/>
        <end position="452"/>
    </location>
</feature>
<feature type="helix" evidence="16">
    <location>
        <begin position="459"/>
        <end position="468"/>
    </location>
</feature>
<feature type="strand" evidence="16">
    <location>
        <begin position="470"/>
        <end position="477"/>
    </location>
</feature>
<feature type="helix" evidence="16">
    <location>
        <begin position="479"/>
        <end position="483"/>
    </location>
</feature>
<feature type="turn" evidence="16">
    <location>
        <begin position="484"/>
        <end position="487"/>
    </location>
</feature>
<feature type="helix" evidence="16">
    <location>
        <begin position="488"/>
        <end position="492"/>
    </location>
</feature>
<feature type="helix" evidence="16">
    <location>
        <begin position="494"/>
        <end position="501"/>
    </location>
</feature>
<feature type="strand" evidence="16">
    <location>
        <begin position="504"/>
        <end position="511"/>
    </location>
</feature>
<feature type="helix" evidence="16">
    <location>
        <begin position="518"/>
        <end position="529"/>
    </location>
</feature>
<feature type="strand" evidence="16">
    <location>
        <begin position="532"/>
        <end position="538"/>
    </location>
</feature>
<feature type="helix" evidence="16">
    <location>
        <begin position="542"/>
        <end position="545"/>
    </location>
</feature>
<feature type="strand" evidence="16">
    <location>
        <begin position="546"/>
        <end position="548"/>
    </location>
</feature>
<feature type="helix" evidence="16">
    <location>
        <begin position="550"/>
        <end position="558"/>
    </location>
</feature>
<name>IRPL1_HUMAN</name>
<keyword id="KW-0002">3D-structure</keyword>
<keyword id="KW-0025">Alternative splicing</keyword>
<keyword id="KW-1003">Cell membrane</keyword>
<keyword id="KW-0966">Cell projection</keyword>
<keyword id="KW-0963">Cytoplasm</keyword>
<keyword id="KW-1015">Disulfide bond</keyword>
<keyword id="KW-0325">Glycoprotein</keyword>
<keyword id="KW-0378">Hydrolase</keyword>
<keyword id="KW-0393">Immunoglobulin domain</keyword>
<keyword id="KW-0991">Intellectual disability</keyword>
<keyword id="KW-0472">Membrane</keyword>
<keyword id="KW-0520">NAD</keyword>
<keyword id="KW-1267">Proteomics identification</keyword>
<keyword id="KW-0675">Receptor</keyword>
<keyword id="KW-1185">Reference proteome</keyword>
<keyword id="KW-0677">Repeat</keyword>
<keyword id="KW-0732">Signal</keyword>
<keyword id="KW-0812">Transmembrane</keyword>
<keyword id="KW-1133">Transmembrane helix</keyword>
<comment type="function">
    <text evidence="2 3 11 12">May regulate secretion and presynaptic differentiation through inhibition of the activity of N-type voltage-gated calcium channel (PubMed:12783849). May activate the MAP kinase JNK (PubMed:15123616). Plays a role in neurite outgrowth (By similarity). During dendritic spine formation can bidirectionally induce pre- and post-synaptic differentiation of neurons by trans-synaptically binding to PTPRD (By similarity).</text>
</comment>
<comment type="catalytic activity">
    <reaction evidence="6">
        <text>NAD(+) + H2O = ADP-D-ribose + nicotinamide + H(+)</text>
        <dbReference type="Rhea" id="RHEA:16301"/>
        <dbReference type="ChEBI" id="CHEBI:15377"/>
        <dbReference type="ChEBI" id="CHEBI:15378"/>
        <dbReference type="ChEBI" id="CHEBI:17154"/>
        <dbReference type="ChEBI" id="CHEBI:57540"/>
        <dbReference type="ChEBI" id="CHEBI:57967"/>
        <dbReference type="EC" id="3.2.2.6"/>
    </reaction>
    <physiologicalReaction direction="left-to-right" evidence="6">
        <dbReference type="Rhea" id="RHEA:16302"/>
    </physiologicalReaction>
</comment>
<comment type="subunit">
    <text evidence="2 11 12">Homodimer (PubMed:15123616). Interacts (calcium-independent) with NCS1 (PubMed:12783849). Interacts (via the first immunoglobilin domain) with PTPRD (via the second immunoglobilin domain); this interaction is PTPRD-splicing-dependent and induces pre- and post-synaptic differentiation of neurons and is required for IL1RAPL1-mediated synapse formation (By similarity).</text>
</comment>
<comment type="subcellular location">
    <subcellularLocation>
        <location evidence="11">Cell membrane</location>
        <topology evidence="11">Single-pass type I membrane protein</topology>
    </subcellularLocation>
    <subcellularLocation>
        <location evidence="11">Cytoplasm</location>
    </subcellularLocation>
    <subcellularLocation>
        <location evidence="1">Cell projection</location>
        <location evidence="1">Axon</location>
    </subcellularLocation>
    <subcellularLocation>
        <location evidence="1">Cell projection</location>
        <location evidence="1">Dendrite</location>
    </subcellularLocation>
    <text evidence="1">May localize to the cell body and growth cones of dendrite-like processes.</text>
</comment>
<comment type="alternative products">
    <event type="alternative splicing"/>
    <isoform>
        <id>Q9NZN1-1</id>
        <name>1</name>
        <sequence type="displayed"/>
    </isoform>
    <text>A number of isoforms are produced.</text>
</comment>
<comment type="tissue specificity">
    <text evidence="8 10">Detected at low levels in heart, skeletal muscle, ovary, skin, amygdala, caudate nucleus, corpus callosum, hippocampus, substantia nigra and thalamus. Detected at very low levels in tonsil, prostate, testis, small intestine, placenta, colon and fetal liver.</text>
</comment>
<comment type="domain">
    <text evidence="6">The TIR domain mediates NAD(+) hydrolase (NADase) activity. Self-association of TIR domains is required for NADase activity.</text>
</comment>
<comment type="disease" evidence="9 13">
    <disease id="DI-00726">
        <name>Intellectual developmental disorder, X-linked 21</name>
        <acronym>XLID21</acronym>
        <description>A disorder characterized by significantly below average general intellectual functioning associated with impairments in adaptive behavior and manifested during the developmental period. Intellectual deficiency is the only primary symptom of non-syndromic X-linked forms, while syndromic intellectual disability presents with associated physical, neurological and/or psychiatric manifestations.</description>
        <dbReference type="MIM" id="300143"/>
    </disease>
    <text>The disease is caused by variants affecting the gene represented in this entry.</text>
</comment>
<comment type="similarity">
    <text evidence="15">Belongs to the interleukin-1 receptor family.</text>
</comment>
<accession>Q9NZN1</accession>
<accession>A0AVG4</accession>
<accession>Q9UJ53</accession>
<protein>
    <recommendedName>
        <fullName>Interleukin-1 receptor accessory protein-like 1</fullName>
        <shortName>IL-1-RAPL-1</shortName>
        <shortName>IL-1RAPL-1</shortName>
        <shortName>IL1RAPL-1</shortName>
        <ecNumber evidence="6">3.2.2.6</ecNumber>
    </recommendedName>
    <alternativeName>
        <fullName>Oligophrenin-4</fullName>
    </alternativeName>
    <alternativeName>
        <fullName>Three immunoglobulin domain-containing IL-1 receptor-related 2</fullName>
        <shortName>TIGIRR-2</shortName>
    </alternativeName>
    <alternativeName>
        <fullName>X-linked interleukin-1 receptor accessory protein-like 1</fullName>
    </alternativeName>
</protein>
<proteinExistence type="evidence at protein level"/>